<proteinExistence type="evidence at protein level"/>
<feature type="chain" id="PRO_0000356249" description="Protein-S-isoprenylcysteine O-methyltransferase A">
    <location>
        <begin position="1"/>
        <end position="197"/>
    </location>
</feature>
<feature type="transmembrane region" description="Helical" evidence="4">
    <location>
        <begin position="16"/>
        <end position="36"/>
    </location>
</feature>
<feature type="transmembrane region" description="Helical" evidence="4">
    <location>
        <begin position="52"/>
        <end position="72"/>
    </location>
</feature>
<feature type="transmembrane region" description="Helical" evidence="4">
    <location>
        <begin position="81"/>
        <end position="101"/>
    </location>
</feature>
<feature type="transmembrane region" description="Helical" evidence="4">
    <location>
        <begin position="140"/>
        <end position="160"/>
    </location>
</feature>
<feature type="binding site" evidence="3">
    <location>
        <begin position="116"/>
        <end position="119"/>
    </location>
    <ligand>
        <name>S-adenosyl-L-methionine</name>
        <dbReference type="ChEBI" id="CHEBI:59789"/>
    </ligand>
</feature>
<feature type="binding site" evidence="3">
    <location>
        <position position="124"/>
    </location>
    <ligand>
        <name>S-adenosyl-L-methionine</name>
        <dbReference type="ChEBI" id="CHEBI:59789"/>
    </ligand>
</feature>
<feature type="binding site" evidence="3">
    <location>
        <begin position="129"/>
        <end position="132"/>
    </location>
    <ligand>
        <name>S-adenosyl-L-methionine</name>
        <dbReference type="ChEBI" id="CHEBI:59789"/>
    </ligand>
</feature>
<feature type="binding site" evidence="2">
    <location>
        <position position="166"/>
    </location>
    <ligand>
        <name>substrate</name>
    </ligand>
</feature>
<feature type="binding site" evidence="3">
    <location>
        <position position="170"/>
    </location>
    <ligand>
        <name>S-adenosyl-L-methionine</name>
        <dbReference type="ChEBI" id="CHEBI:59789"/>
    </ligand>
</feature>
<feature type="mutagenesis site" description="No effect; when associated with R-112 and E-165. Activity increased to the level of that of ICMTB; when associated with R-112; E-165; Q-187 and R-188." evidence="8">
    <original>N</original>
    <variation>R</variation>
    <location>
        <position position="111"/>
    </location>
</feature>
<feature type="mutagenesis site" description="No effect; when associated with R-111 and E-165. Activity increased to the level of that of ICMTB; when associated with R-111; E-165; Q-187 and R-188." evidence="8">
    <original>Y</original>
    <variation>R</variation>
    <location>
        <position position="112"/>
    </location>
</feature>
<feature type="mutagenesis site" description="No effect. No effect; when associated with R-111 and R-112. Activity increased to the level of that of ICMTB; when associated with R-111; R-112; Q-187 and R-188." evidence="8">
    <original>Q</original>
    <variation>E</variation>
    <location>
        <position position="165"/>
    </location>
</feature>
<feature type="mutagenesis site" description="Activity increased to the level of that of ICMTB; when associated with R-111; R-112; E-165 and R-188." evidence="8">
    <original>E</original>
    <variation>Q</variation>
    <location>
        <position position="187"/>
    </location>
</feature>
<feature type="mutagenesis site" description="Activity increased to the level of that of ICMTB; when associated with R-111; R-112; E-165 and Q-187." evidence="8">
    <original>S</original>
    <variation>R</variation>
    <location>
        <position position="188"/>
    </location>
</feature>
<sequence length="197" mass="22525">MTEIFSDTSIRQLSQMLLSLIFFHISEYILAITIHGASNVTLSSLLITKHYALAMLLSLLEYLTEIILFPGLKQHWWVSNFGLIMIIVGEIIRKAAIITAGRSFTHLIKINYEEHHGLVTHGVYRLMRHPSYCGFLIWSVGTQVMLCNPVSAVAFAVVVWRFFAQRIPYEEYFLNQFFGVQYLEYAESVASGVPFVN</sequence>
<organism>
    <name type="scientific">Arabidopsis thaliana</name>
    <name type="common">Mouse-ear cress</name>
    <dbReference type="NCBI Taxonomy" id="3702"/>
    <lineage>
        <taxon>Eukaryota</taxon>
        <taxon>Viridiplantae</taxon>
        <taxon>Streptophyta</taxon>
        <taxon>Embryophyta</taxon>
        <taxon>Tracheophyta</taxon>
        <taxon>Spermatophyta</taxon>
        <taxon>Magnoliopsida</taxon>
        <taxon>eudicotyledons</taxon>
        <taxon>Gunneridae</taxon>
        <taxon>Pentapetalae</taxon>
        <taxon>rosids</taxon>
        <taxon>malvids</taxon>
        <taxon>Brassicales</taxon>
        <taxon>Brassicaceae</taxon>
        <taxon>Camelineae</taxon>
        <taxon>Arabidopsis</taxon>
    </lineage>
</organism>
<gene>
    <name evidence="12" type="primary">ICMTA</name>
    <name evidence="10" type="synonym">PCM</name>
    <name evidence="11" type="synonym">STE14</name>
    <name evidence="11" type="synonym">STE14A</name>
    <name evidence="14" type="ordered locus">At5g23320</name>
    <name evidence="15" type="ORF">MKD15.18</name>
</gene>
<keyword id="KW-0256">Endoplasmic reticulum</keyword>
<keyword id="KW-0472">Membrane</keyword>
<keyword id="KW-0489">Methyltransferase</keyword>
<keyword id="KW-1185">Reference proteome</keyword>
<keyword id="KW-0949">S-adenosyl-L-methionine</keyword>
<keyword id="KW-0808">Transferase</keyword>
<keyword id="KW-0812">Transmembrane</keyword>
<keyword id="KW-1133">Transmembrane helix</keyword>
<comment type="function">
    <text evidence="5 6 7 9">Catalyzes the post-translational methylation of isoprenylated C-terminal cysteine residues, resulting in the modulation of the function of prenylated proteins. Involved in negative regulation of abscisic acid signaling. Carboxyl methylation is a reversible and potentially regulated step in the post-translational modification of prenylated proteins.</text>
</comment>
<comment type="catalytic activity">
    <reaction evidence="5 6 7">
        <text>[protein]-C-terminal S-[(2E,6E)-farnesyl]-L-cysteine + S-adenosyl-L-methionine = [protein]-C-terminal S-[(2E,6E)-farnesyl]-L-cysteine methyl ester + S-adenosyl-L-homocysteine</text>
        <dbReference type="Rhea" id="RHEA:21672"/>
        <dbReference type="Rhea" id="RHEA-COMP:12125"/>
        <dbReference type="Rhea" id="RHEA-COMP:12126"/>
        <dbReference type="ChEBI" id="CHEBI:57856"/>
        <dbReference type="ChEBI" id="CHEBI:59789"/>
        <dbReference type="ChEBI" id="CHEBI:90510"/>
        <dbReference type="ChEBI" id="CHEBI:90511"/>
        <dbReference type="EC" id="2.1.1.100"/>
    </reaction>
</comment>
<comment type="cofactor">
    <cofactor evidence="1">
        <name>Zn(2+)</name>
        <dbReference type="ChEBI" id="CHEBI:29105"/>
    </cofactor>
    <text evidence="1">Divalent metal cations. Probably Zn(2+).</text>
</comment>
<comment type="activity regulation">
    <text evidence="7">Inhibited by farnesylthioacetic acid (FTAA) and N-acetyl-S-trans, trans-farnesyl-l-cysteine (AFC).</text>
</comment>
<comment type="biophysicochemical properties">
    <kinetics>
        <KM evidence="7">22.7 uM for AFC as methyl acceptor</KM>
        <KM evidence="7">13.7 uM for AGGC as methyl acceptor</KM>
        <Vmax evidence="7">5.0 pmol/min/mg enzyme toward AFC as methyl acceptor</Vmax>
        <Vmax evidence="7">3.7 pmol/min/mg enzyme toward AGGC as methyl acceptor</Vmax>
    </kinetics>
</comment>
<comment type="subcellular location">
    <subcellularLocation>
        <location evidence="5 8">Endoplasmic reticulum membrane</location>
        <topology evidence="5 8">Multi-pass membrane protein</topology>
    </subcellularLocation>
</comment>
<comment type="tissue specificity">
    <text evidence="6 7">Expressed primarily in flowers, stems, leaves and roots. Almost not expressed in siliques. Detected in root tips and vascular tissues of roots, cotyledons, petiols, hypocotyls, filaments, pollen grains and the distal and proximal portions of the gynoecium.</text>
</comment>
<comment type="induction">
    <text evidence="9">Not induced by abscisic acid or auxin.</text>
</comment>
<comment type="disruption phenotype">
    <text evidence="8">No visible phenotype; due to redundancy with ICMTB. Icmta and icmtb double mutants have altered phyllotaxis, fasciated stems and development of axillary flowers.</text>
</comment>
<comment type="miscellaneous">
    <text>ICMTA is less widely expressed and has a lower catalytic activity than ICMTB.</text>
</comment>
<comment type="similarity">
    <text evidence="13">Belongs to the class VI-like SAM-binding methyltransferase superfamily. Isoprenylcysteine carboxyl methyltransferase family.</text>
</comment>
<comment type="sequence caution" evidence="13">
    <conflict type="erroneous termination">
        <sequence resource="EMBL-CDS" id="ABK28709"/>
    </conflict>
    <text>Extended C-terminus.</text>
</comment>
<dbReference type="EC" id="2.1.1.100" evidence="5 6 7"/>
<dbReference type="EMBL" id="AB007648">
    <property type="protein sequence ID" value="BAB11187.1"/>
    <property type="molecule type" value="Genomic_DNA"/>
</dbReference>
<dbReference type="EMBL" id="CP002688">
    <property type="protein sequence ID" value="AED93151.1"/>
    <property type="molecule type" value="Genomic_DNA"/>
</dbReference>
<dbReference type="EMBL" id="DQ446977">
    <property type="protein sequence ID" value="ABE66176.1"/>
    <property type="molecule type" value="mRNA"/>
</dbReference>
<dbReference type="EMBL" id="DQ653301">
    <property type="protein sequence ID" value="ABK28709.1"/>
    <property type="status" value="ALT_SEQ"/>
    <property type="molecule type" value="mRNA"/>
</dbReference>
<dbReference type="RefSeq" id="NP_197723.1">
    <property type="nucleotide sequence ID" value="NM_122238.2"/>
</dbReference>
<dbReference type="SMR" id="Q9FMW9"/>
<dbReference type="BioGRID" id="17671">
    <property type="interactions" value="2"/>
</dbReference>
<dbReference type="FunCoup" id="Q9FMW9">
    <property type="interactions" value="2079"/>
</dbReference>
<dbReference type="IntAct" id="Q9FMW9">
    <property type="interactions" value="1"/>
</dbReference>
<dbReference type="STRING" id="3702.Q9FMW9"/>
<dbReference type="PaxDb" id="3702-AT5G23320.1"/>
<dbReference type="EnsemblPlants" id="AT5G23320.1">
    <property type="protein sequence ID" value="AT5G23320.1"/>
    <property type="gene ID" value="AT5G23320"/>
</dbReference>
<dbReference type="GeneID" id="832396"/>
<dbReference type="Gramene" id="AT5G23320.1">
    <property type="protein sequence ID" value="AT5G23320.1"/>
    <property type="gene ID" value="AT5G23320"/>
</dbReference>
<dbReference type="KEGG" id="ath:AT5G23320"/>
<dbReference type="Araport" id="AT5G23320"/>
<dbReference type="TAIR" id="AT5G23320">
    <property type="gene designation" value="STE14A"/>
</dbReference>
<dbReference type="eggNOG" id="KOG2628">
    <property type="taxonomic scope" value="Eukaryota"/>
</dbReference>
<dbReference type="HOGENOM" id="CLU_065200_0_2_1"/>
<dbReference type="InParanoid" id="Q9FMW9"/>
<dbReference type="OMA" id="GMVPQVW"/>
<dbReference type="OrthoDB" id="422086at2759"/>
<dbReference type="PhylomeDB" id="Q9FMW9"/>
<dbReference type="BioCyc" id="MetaCyc:AT5G23320-MONOMER"/>
<dbReference type="SABIO-RK" id="Q9FMW9"/>
<dbReference type="PRO" id="PR:Q9FMW9"/>
<dbReference type="Proteomes" id="UP000006548">
    <property type="component" value="Chromosome 5"/>
</dbReference>
<dbReference type="ExpressionAtlas" id="Q9FMW9">
    <property type="expression patterns" value="baseline and differential"/>
</dbReference>
<dbReference type="GO" id="GO:0005783">
    <property type="term" value="C:endoplasmic reticulum"/>
    <property type="evidence" value="ECO:0000314"/>
    <property type="project" value="TAIR"/>
</dbReference>
<dbReference type="GO" id="GO:0005789">
    <property type="term" value="C:endoplasmic reticulum membrane"/>
    <property type="evidence" value="ECO:0007669"/>
    <property type="project" value="UniProtKB-SubCell"/>
</dbReference>
<dbReference type="GO" id="GO:0010340">
    <property type="term" value="F:carboxyl-O-methyltransferase activity"/>
    <property type="evidence" value="ECO:0000315"/>
    <property type="project" value="TAIR"/>
</dbReference>
<dbReference type="GO" id="GO:0004671">
    <property type="term" value="F:protein C-terminal S-isoprenylcysteine carboxyl O-methyltransferase activity"/>
    <property type="evidence" value="ECO:0000314"/>
    <property type="project" value="TAIR"/>
</dbReference>
<dbReference type="GO" id="GO:0006481">
    <property type="term" value="P:C-terminal protein methylation"/>
    <property type="evidence" value="ECO:0000314"/>
    <property type="project" value="TAIR"/>
</dbReference>
<dbReference type="GO" id="GO:0009908">
    <property type="term" value="P:flower development"/>
    <property type="evidence" value="ECO:0000315"/>
    <property type="project" value="TAIR"/>
</dbReference>
<dbReference type="GO" id="GO:0009788">
    <property type="term" value="P:negative regulation of abscisic acid-activated signaling pathway"/>
    <property type="evidence" value="ECO:0000303"/>
    <property type="project" value="TAIR"/>
</dbReference>
<dbReference type="GO" id="GO:0048367">
    <property type="term" value="P:shoot system development"/>
    <property type="evidence" value="ECO:0000315"/>
    <property type="project" value="TAIR"/>
</dbReference>
<dbReference type="FunFam" id="1.20.120.1630:FF:000007">
    <property type="entry name" value="Protein-S-isoprenylcysteine O-methyltransferase"/>
    <property type="match status" value="1"/>
</dbReference>
<dbReference type="Gene3D" id="1.20.120.1630">
    <property type="match status" value="1"/>
</dbReference>
<dbReference type="InterPro" id="IPR007269">
    <property type="entry name" value="ICMT_MeTrfase"/>
</dbReference>
<dbReference type="InterPro" id="IPR025770">
    <property type="entry name" value="PPMT_MeTrfase"/>
</dbReference>
<dbReference type="PANTHER" id="PTHR12714">
    <property type="entry name" value="PROTEIN-S ISOPRENYLCYSTEINE O-METHYLTRANSFERASE"/>
    <property type="match status" value="1"/>
</dbReference>
<dbReference type="PANTHER" id="PTHR12714:SF9">
    <property type="entry name" value="PROTEIN-S-ISOPRENYLCYSTEINE O-METHYLTRANSFERASE"/>
    <property type="match status" value="1"/>
</dbReference>
<dbReference type="Pfam" id="PF04140">
    <property type="entry name" value="ICMT"/>
    <property type="match status" value="1"/>
</dbReference>
<dbReference type="PROSITE" id="PS51564">
    <property type="entry name" value="SAM_ICMT"/>
    <property type="match status" value="1"/>
</dbReference>
<evidence type="ECO:0000250" key="1"/>
<evidence type="ECO:0000250" key="2">
    <source>
        <dbReference type="UniProtKB" id="D6WJ77"/>
    </source>
</evidence>
<evidence type="ECO:0000250" key="3">
    <source>
        <dbReference type="UniProtKB" id="Q8TMG0"/>
    </source>
</evidence>
<evidence type="ECO:0000255" key="4"/>
<evidence type="ECO:0000269" key="5">
    <source>
    </source>
</evidence>
<evidence type="ECO:0000269" key="6">
    <source>
    </source>
</evidence>
<evidence type="ECO:0000269" key="7">
    <source>
    </source>
</evidence>
<evidence type="ECO:0000269" key="8">
    <source>
    </source>
</evidence>
<evidence type="ECO:0000269" key="9">
    <source>
    </source>
</evidence>
<evidence type="ECO:0000303" key="10">
    <source>
    </source>
</evidence>
<evidence type="ECO:0000303" key="11">
    <source>
    </source>
</evidence>
<evidence type="ECO:0000303" key="12">
    <source>
    </source>
</evidence>
<evidence type="ECO:0000305" key="13"/>
<evidence type="ECO:0000312" key="14">
    <source>
        <dbReference type="Araport" id="AT5G23320"/>
    </source>
</evidence>
<evidence type="ECO:0000312" key="15">
    <source>
        <dbReference type="EMBL" id="BAB11187.1"/>
    </source>
</evidence>
<reference key="1">
    <citation type="journal article" date="2000" name="Plant J.">
        <title>Carboxyl-methylation of prenylated calmodulin CaM53 is required for efficient plasma membrane targeting of the protein.</title>
        <authorList>
            <person name="Rodriguez-Concepcion M."/>
            <person name="Toledo-Ortiz G."/>
            <person name="Yalovsky S."/>
            <person name="Caldelari D."/>
            <person name="Gruissem W."/>
        </authorList>
    </citation>
    <scope>NUCLEOTIDE SEQUENCE [MRNA]</scope>
    <scope>FUNCTION</scope>
    <scope>CATALYTIC ACTIVITY</scope>
    <scope>SUBCELLULAR LOCATION</scope>
</reference>
<reference key="2">
    <citation type="journal article" date="2001" name="Plant Mol. Biol.">
        <title>Identification and functional expression in yeast of a prenylcysteine alpha-carboxyl methyltransferase gene from Arabidopsis thaliana.</title>
        <authorList>
            <person name="Crowell D.N."/>
            <person name="Kennedy M."/>
        </authorList>
    </citation>
    <scope>NUCLEOTIDE SEQUENCE [MRNA]</scope>
    <scope>FUNCTION</scope>
    <scope>CATALYTIC ACTIVITY</scope>
    <scope>TISSUE SPECIFICITY</scope>
</reference>
<reference key="3">
    <citation type="journal article" date="1997" name="DNA Res.">
        <title>Structural analysis of Arabidopsis thaliana chromosome 5. III. Sequence features of the regions of 1,191,918 bp covered by seventeen physically assigned P1 clones.</title>
        <authorList>
            <person name="Nakamura Y."/>
            <person name="Sato S."/>
            <person name="Kaneko T."/>
            <person name="Kotani H."/>
            <person name="Asamizu E."/>
            <person name="Miyajima N."/>
            <person name="Tabata S."/>
        </authorList>
    </citation>
    <scope>NUCLEOTIDE SEQUENCE [LARGE SCALE GENOMIC DNA]</scope>
    <source>
        <strain>cv. Columbia</strain>
    </source>
</reference>
<reference key="4">
    <citation type="journal article" date="2017" name="Plant J.">
        <title>Araport11: a complete reannotation of the Arabidopsis thaliana reference genome.</title>
        <authorList>
            <person name="Cheng C.Y."/>
            <person name="Krishnakumar V."/>
            <person name="Chan A.P."/>
            <person name="Thibaud-Nissen F."/>
            <person name="Schobel S."/>
            <person name="Town C.D."/>
        </authorList>
    </citation>
    <scope>GENOME REANNOTATION</scope>
    <source>
        <strain>cv. Columbia</strain>
    </source>
</reference>
<reference key="5">
    <citation type="journal article" date="2006" name="Plant Biotechnol. J.">
        <title>Simultaneous high-throughput recombinational cloning of open reading frames in closed and open configurations.</title>
        <authorList>
            <person name="Underwood B.A."/>
            <person name="Vanderhaeghen R."/>
            <person name="Whitford R."/>
            <person name="Town C.D."/>
            <person name="Hilson P."/>
        </authorList>
    </citation>
    <scope>NUCLEOTIDE SEQUENCE [LARGE SCALE MRNA]</scope>
    <source>
        <strain>cv. Columbia</strain>
    </source>
</reference>
<reference key="6">
    <citation type="journal article" date="2002" name="Plant J.">
        <title>Prenylcysteine alpha-carboxyl methyltransferase expression and function in Arabidopsis thaliana.</title>
        <authorList>
            <person name="Narasimha Chary S."/>
            <person name="Bultema R.L."/>
            <person name="Packard C.E."/>
            <person name="Crowell D.N."/>
        </authorList>
    </citation>
    <scope>FUNCTION</scope>
    <scope>BIOPHYSICOCHEMICAL PROPERTIES</scope>
    <scope>CATALYTIC ACTIVITY</scope>
    <scope>TISSUE SPECIFICITY</scope>
    <scope>ACTIVITY REGULATION</scope>
</reference>
<reference key="7">
    <citation type="journal article" date="2008" name="Plant Physiol.">
        <title>Functional analysis of Arabidopsis postprenylation CaaX processing enzymes and their function in subcellular protein targeting.</title>
        <authorList>
            <person name="Bracha-Drori K."/>
            <person name="Shichrur K."/>
            <person name="Lubetzky T.C."/>
            <person name="Yalovsky S."/>
        </authorList>
    </citation>
    <scope>SUBCELLULAR LOCATION</scope>
    <scope>MUTAGENESIS OF ASN-111; TYR-112; GLN-165; GLU-187 AND SER-188</scope>
    <scope>DISRUPTION PHENOTYPE</scope>
</reference>
<reference key="8">
    <citation type="journal article" date="2008" name="Plant Cell">
        <title>Isoprenylcysteine methylation and demethylation regulate abscisic acid signaling in Arabidopsis.</title>
        <authorList>
            <person name="Huizinga D.H."/>
            <person name="Omosegbon O."/>
            <person name="Omery B."/>
            <person name="Crowell D.N."/>
        </authorList>
    </citation>
    <scope>FUNCTION</scope>
    <scope>INDUCTION</scope>
</reference>
<protein>
    <recommendedName>
        <fullName evidence="11">Protein-S-isoprenylcysteine O-methyltransferase A</fullName>
        <shortName evidence="12">AtICMTA</shortName>
        <ecNumber evidence="5 6 7">2.1.1.100</ecNumber>
    </recommendedName>
    <alternativeName>
        <fullName evidence="11">Isoprenylcysteine carboxylmethyltransferase A</fullName>
    </alternativeName>
    <alternativeName>
        <fullName evidence="11">Prenylated protein carboxyl methyltransferase A</fullName>
    </alternativeName>
    <alternativeName>
        <fullName evidence="10">Prenylcysteine carboxyl methyltransferase A</fullName>
        <shortName evidence="10">AtPCM</shortName>
    </alternativeName>
</protein>
<accession>Q9FMW9</accession>
<accession>A0MFH5</accession>
<name>ICMTA_ARATH</name>